<accession>Q5M1R9</accession>
<evidence type="ECO:0000255" key="1">
    <source>
        <dbReference type="HAMAP-Rule" id="MF_00163"/>
    </source>
</evidence>
<protein>
    <recommendedName>
        <fullName evidence="1">Peptide deformylase</fullName>
        <shortName evidence="1">PDF</shortName>
        <ecNumber evidence="1">3.5.1.88</ecNumber>
    </recommendedName>
    <alternativeName>
        <fullName evidence="1">Polypeptide deformylase</fullName>
    </alternativeName>
</protein>
<organism>
    <name type="scientific">Streptococcus thermophilus (strain CNRZ 1066)</name>
    <dbReference type="NCBI Taxonomy" id="299768"/>
    <lineage>
        <taxon>Bacteria</taxon>
        <taxon>Bacillati</taxon>
        <taxon>Bacillota</taxon>
        <taxon>Bacilli</taxon>
        <taxon>Lactobacillales</taxon>
        <taxon>Streptococcaceae</taxon>
        <taxon>Streptococcus</taxon>
    </lineage>
</organism>
<reference key="1">
    <citation type="journal article" date="2004" name="Nat. Biotechnol.">
        <title>Complete sequence and comparative genome analysis of the dairy bacterium Streptococcus thermophilus.</title>
        <authorList>
            <person name="Bolotin A."/>
            <person name="Quinquis B."/>
            <person name="Renault P."/>
            <person name="Sorokin A."/>
            <person name="Ehrlich S.D."/>
            <person name="Kulakauskas S."/>
            <person name="Lapidus A."/>
            <person name="Goltsman E."/>
            <person name="Mazur M."/>
            <person name="Pusch G.D."/>
            <person name="Fonstein M."/>
            <person name="Overbeek R."/>
            <person name="Kyprides N."/>
            <person name="Purnelle B."/>
            <person name="Prozzi D."/>
            <person name="Ngui K."/>
            <person name="Masuy D."/>
            <person name="Hancy F."/>
            <person name="Burteau S."/>
            <person name="Boutry M."/>
            <person name="Delcour J."/>
            <person name="Goffeau A."/>
            <person name="Hols P."/>
        </authorList>
    </citation>
    <scope>NUCLEOTIDE SEQUENCE [LARGE SCALE GENOMIC DNA]</scope>
    <source>
        <strain>CNRZ 1066</strain>
    </source>
</reference>
<sequence length="204" mass="22777">MDAQTKIIRASHMIDMNDIIREGNPTLRAVAEDVTLPLSDEDIILGEKMMQFLRNSQDPVIAEKMGLRGGVGLAAPQLDISKRIIAVLVPNPEDAKGNPPKEAYSLQEIMYNPKVVAHSVQEAALGNGEGCLSVDRDVPGYVVRHARVTIEYFNKEGEKKRIKLRGYDSIVVQHEIDHTNGIMFYDRINKDNPFTIKDGLLIIE</sequence>
<feature type="chain" id="PRO_0000301113" description="Peptide deformylase">
    <location>
        <begin position="1"/>
        <end position="204"/>
    </location>
</feature>
<feature type="active site" evidence="1">
    <location>
        <position position="175"/>
    </location>
</feature>
<feature type="binding site" evidence="1">
    <location>
        <position position="131"/>
    </location>
    <ligand>
        <name>Fe cation</name>
        <dbReference type="ChEBI" id="CHEBI:24875"/>
    </ligand>
</feature>
<feature type="binding site" evidence="1">
    <location>
        <position position="174"/>
    </location>
    <ligand>
        <name>Fe cation</name>
        <dbReference type="ChEBI" id="CHEBI:24875"/>
    </ligand>
</feature>
<feature type="binding site" evidence="1">
    <location>
        <position position="178"/>
    </location>
    <ligand>
        <name>Fe cation</name>
        <dbReference type="ChEBI" id="CHEBI:24875"/>
    </ligand>
</feature>
<gene>
    <name evidence="1" type="primary">def</name>
    <name type="ordered locus">str0151</name>
</gene>
<proteinExistence type="inferred from homology"/>
<dbReference type="EC" id="3.5.1.88" evidence="1"/>
<dbReference type="EMBL" id="CP000024">
    <property type="protein sequence ID" value="AAV61765.1"/>
    <property type="molecule type" value="Genomic_DNA"/>
</dbReference>
<dbReference type="RefSeq" id="WP_011225356.1">
    <property type="nucleotide sequence ID" value="NC_006449.1"/>
</dbReference>
<dbReference type="SMR" id="Q5M1R9"/>
<dbReference type="GeneID" id="66898095"/>
<dbReference type="KEGG" id="stc:str0151"/>
<dbReference type="HOGENOM" id="CLU_061901_4_0_9"/>
<dbReference type="GO" id="GO:0046872">
    <property type="term" value="F:metal ion binding"/>
    <property type="evidence" value="ECO:0007669"/>
    <property type="project" value="UniProtKB-KW"/>
</dbReference>
<dbReference type="GO" id="GO:0042586">
    <property type="term" value="F:peptide deformylase activity"/>
    <property type="evidence" value="ECO:0007669"/>
    <property type="project" value="UniProtKB-UniRule"/>
</dbReference>
<dbReference type="GO" id="GO:0043686">
    <property type="term" value="P:co-translational protein modification"/>
    <property type="evidence" value="ECO:0007669"/>
    <property type="project" value="TreeGrafter"/>
</dbReference>
<dbReference type="GO" id="GO:0006412">
    <property type="term" value="P:translation"/>
    <property type="evidence" value="ECO:0007669"/>
    <property type="project" value="UniProtKB-UniRule"/>
</dbReference>
<dbReference type="CDD" id="cd00487">
    <property type="entry name" value="Pep_deformylase"/>
    <property type="match status" value="1"/>
</dbReference>
<dbReference type="FunFam" id="3.90.45.10:FF:000002">
    <property type="entry name" value="Peptide deformylase"/>
    <property type="match status" value="1"/>
</dbReference>
<dbReference type="Gene3D" id="3.90.45.10">
    <property type="entry name" value="Peptide deformylase"/>
    <property type="match status" value="1"/>
</dbReference>
<dbReference type="HAMAP" id="MF_00163">
    <property type="entry name" value="Pep_deformylase"/>
    <property type="match status" value="1"/>
</dbReference>
<dbReference type="InterPro" id="IPR023635">
    <property type="entry name" value="Peptide_deformylase"/>
</dbReference>
<dbReference type="InterPro" id="IPR036821">
    <property type="entry name" value="Peptide_deformylase_sf"/>
</dbReference>
<dbReference type="NCBIfam" id="TIGR00079">
    <property type="entry name" value="pept_deformyl"/>
    <property type="match status" value="1"/>
</dbReference>
<dbReference type="PANTHER" id="PTHR10458">
    <property type="entry name" value="PEPTIDE DEFORMYLASE"/>
    <property type="match status" value="1"/>
</dbReference>
<dbReference type="PANTHER" id="PTHR10458:SF8">
    <property type="entry name" value="PEPTIDE DEFORMYLASE 2"/>
    <property type="match status" value="1"/>
</dbReference>
<dbReference type="Pfam" id="PF01327">
    <property type="entry name" value="Pep_deformylase"/>
    <property type="match status" value="1"/>
</dbReference>
<dbReference type="PIRSF" id="PIRSF004749">
    <property type="entry name" value="Pep_def"/>
    <property type="match status" value="1"/>
</dbReference>
<dbReference type="PRINTS" id="PR01576">
    <property type="entry name" value="PDEFORMYLASE"/>
</dbReference>
<dbReference type="SUPFAM" id="SSF56420">
    <property type="entry name" value="Peptide deformylase"/>
    <property type="match status" value="1"/>
</dbReference>
<name>DEF_STRT1</name>
<comment type="function">
    <text evidence="1">Removes the formyl group from the N-terminal Met of newly synthesized proteins. Requires at least a dipeptide for an efficient rate of reaction. N-terminal L-methionine is a prerequisite for activity but the enzyme has broad specificity at other positions.</text>
</comment>
<comment type="catalytic activity">
    <reaction evidence="1">
        <text>N-terminal N-formyl-L-methionyl-[peptide] + H2O = N-terminal L-methionyl-[peptide] + formate</text>
        <dbReference type="Rhea" id="RHEA:24420"/>
        <dbReference type="Rhea" id="RHEA-COMP:10639"/>
        <dbReference type="Rhea" id="RHEA-COMP:10640"/>
        <dbReference type="ChEBI" id="CHEBI:15377"/>
        <dbReference type="ChEBI" id="CHEBI:15740"/>
        <dbReference type="ChEBI" id="CHEBI:49298"/>
        <dbReference type="ChEBI" id="CHEBI:64731"/>
        <dbReference type="EC" id="3.5.1.88"/>
    </reaction>
</comment>
<comment type="cofactor">
    <cofactor evidence="1">
        <name>Fe(2+)</name>
        <dbReference type="ChEBI" id="CHEBI:29033"/>
    </cofactor>
    <text evidence="1">Binds 1 Fe(2+) ion.</text>
</comment>
<comment type="similarity">
    <text evidence="1">Belongs to the polypeptide deformylase family.</text>
</comment>
<keyword id="KW-0378">Hydrolase</keyword>
<keyword id="KW-0408">Iron</keyword>
<keyword id="KW-0479">Metal-binding</keyword>
<keyword id="KW-0648">Protein biosynthesis</keyword>